<dbReference type="EMBL" id="AE006470">
    <property type="protein sequence ID" value="AAM73395.1"/>
    <property type="molecule type" value="Genomic_DNA"/>
</dbReference>
<dbReference type="RefSeq" id="NP_663053.1">
    <property type="nucleotide sequence ID" value="NC_002932.3"/>
</dbReference>
<dbReference type="RefSeq" id="WP_010933832.1">
    <property type="nucleotide sequence ID" value="NC_002932.3"/>
</dbReference>
<dbReference type="SMR" id="Q8KAI2"/>
<dbReference type="STRING" id="194439.CT2179"/>
<dbReference type="EnsemblBacteria" id="AAM73395">
    <property type="protein sequence ID" value="AAM73395"/>
    <property type="gene ID" value="CT2179"/>
</dbReference>
<dbReference type="KEGG" id="cte:CT2179"/>
<dbReference type="PATRIC" id="fig|194439.7.peg.1978"/>
<dbReference type="eggNOG" id="COG0093">
    <property type="taxonomic scope" value="Bacteria"/>
</dbReference>
<dbReference type="HOGENOM" id="CLU_095071_2_1_10"/>
<dbReference type="OrthoDB" id="9806379at2"/>
<dbReference type="Proteomes" id="UP000001007">
    <property type="component" value="Chromosome"/>
</dbReference>
<dbReference type="GO" id="GO:0022625">
    <property type="term" value="C:cytosolic large ribosomal subunit"/>
    <property type="evidence" value="ECO:0007669"/>
    <property type="project" value="TreeGrafter"/>
</dbReference>
<dbReference type="GO" id="GO:0070180">
    <property type="term" value="F:large ribosomal subunit rRNA binding"/>
    <property type="evidence" value="ECO:0007669"/>
    <property type="project" value="TreeGrafter"/>
</dbReference>
<dbReference type="GO" id="GO:0003735">
    <property type="term" value="F:structural constituent of ribosome"/>
    <property type="evidence" value="ECO:0007669"/>
    <property type="project" value="InterPro"/>
</dbReference>
<dbReference type="GO" id="GO:0006412">
    <property type="term" value="P:translation"/>
    <property type="evidence" value="ECO:0007669"/>
    <property type="project" value="UniProtKB-UniRule"/>
</dbReference>
<dbReference type="CDD" id="cd00337">
    <property type="entry name" value="Ribosomal_uL14"/>
    <property type="match status" value="1"/>
</dbReference>
<dbReference type="FunFam" id="2.40.150.20:FF:000001">
    <property type="entry name" value="50S ribosomal protein L14"/>
    <property type="match status" value="1"/>
</dbReference>
<dbReference type="Gene3D" id="2.40.150.20">
    <property type="entry name" value="Ribosomal protein L14"/>
    <property type="match status" value="1"/>
</dbReference>
<dbReference type="HAMAP" id="MF_01367">
    <property type="entry name" value="Ribosomal_uL14"/>
    <property type="match status" value="1"/>
</dbReference>
<dbReference type="InterPro" id="IPR000218">
    <property type="entry name" value="Ribosomal_uL14"/>
</dbReference>
<dbReference type="InterPro" id="IPR005745">
    <property type="entry name" value="Ribosomal_uL14_bac-type"/>
</dbReference>
<dbReference type="InterPro" id="IPR019972">
    <property type="entry name" value="Ribosomal_uL14_CS"/>
</dbReference>
<dbReference type="InterPro" id="IPR036853">
    <property type="entry name" value="Ribosomal_uL14_sf"/>
</dbReference>
<dbReference type="NCBIfam" id="TIGR01067">
    <property type="entry name" value="rplN_bact"/>
    <property type="match status" value="1"/>
</dbReference>
<dbReference type="PANTHER" id="PTHR11761">
    <property type="entry name" value="50S/60S RIBOSOMAL PROTEIN L14/L23"/>
    <property type="match status" value="1"/>
</dbReference>
<dbReference type="PANTHER" id="PTHR11761:SF3">
    <property type="entry name" value="LARGE RIBOSOMAL SUBUNIT PROTEIN UL14M"/>
    <property type="match status" value="1"/>
</dbReference>
<dbReference type="Pfam" id="PF00238">
    <property type="entry name" value="Ribosomal_L14"/>
    <property type="match status" value="1"/>
</dbReference>
<dbReference type="SMART" id="SM01374">
    <property type="entry name" value="Ribosomal_L14"/>
    <property type="match status" value="1"/>
</dbReference>
<dbReference type="SUPFAM" id="SSF50193">
    <property type="entry name" value="Ribosomal protein L14"/>
    <property type="match status" value="1"/>
</dbReference>
<dbReference type="PROSITE" id="PS00049">
    <property type="entry name" value="RIBOSOMAL_L14"/>
    <property type="match status" value="1"/>
</dbReference>
<reference key="1">
    <citation type="journal article" date="2002" name="Proc. Natl. Acad. Sci. U.S.A.">
        <title>The complete genome sequence of Chlorobium tepidum TLS, a photosynthetic, anaerobic, green-sulfur bacterium.</title>
        <authorList>
            <person name="Eisen J.A."/>
            <person name="Nelson K.E."/>
            <person name="Paulsen I.T."/>
            <person name="Heidelberg J.F."/>
            <person name="Wu M."/>
            <person name="Dodson R.J."/>
            <person name="DeBoy R.T."/>
            <person name="Gwinn M.L."/>
            <person name="Nelson W.C."/>
            <person name="Haft D.H."/>
            <person name="Hickey E.K."/>
            <person name="Peterson J.D."/>
            <person name="Durkin A.S."/>
            <person name="Kolonay J.F."/>
            <person name="Yang F."/>
            <person name="Holt I.E."/>
            <person name="Umayam L.A."/>
            <person name="Mason T.M."/>
            <person name="Brenner M."/>
            <person name="Shea T.P."/>
            <person name="Parksey D.S."/>
            <person name="Nierman W.C."/>
            <person name="Feldblyum T.V."/>
            <person name="Hansen C.L."/>
            <person name="Craven M.B."/>
            <person name="Radune D."/>
            <person name="Vamathevan J.J."/>
            <person name="Khouri H.M."/>
            <person name="White O."/>
            <person name="Gruber T.M."/>
            <person name="Ketchum K.A."/>
            <person name="Venter J.C."/>
            <person name="Tettelin H."/>
            <person name="Bryant D.A."/>
            <person name="Fraser C.M."/>
        </authorList>
    </citation>
    <scope>NUCLEOTIDE SEQUENCE [LARGE SCALE GENOMIC DNA]</scope>
    <source>
        <strain>ATCC 49652 / DSM 12025 / NBRC 103806 / TLS</strain>
    </source>
</reference>
<accession>Q8KAI2</accession>
<organism>
    <name type="scientific">Chlorobaculum tepidum (strain ATCC 49652 / DSM 12025 / NBRC 103806 / TLS)</name>
    <name type="common">Chlorobium tepidum</name>
    <dbReference type="NCBI Taxonomy" id="194439"/>
    <lineage>
        <taxon>Bacteria</taxon>
        <taxon>Pseudomonadati</taxon>
        <taxon>Chlorobiota</taxon>
        <taxon>Chlorobiia</taxon>
        <taxon>Chlorobiales</taxon>
        <taxon>Chlorobiaceae</taxon>
        <taxon>Chlorobaculum</taxon>
    </lineage>
</organism>
<gene>
    <name evidence="1" type="primary">rplN</name>
    <name type="ordered locus">CT2179</name>
</gene>
<feature type="chain" id="PRO_1000055554" description="Large ribosomal subunit protein uL14">
    <location>
        <begin position="1"/>
        <end position="122"/>
    </location>
</feature>
<proteinExistence type="inferred from homology"/>
<comment type="function">
    <text evidence="1">Binds to 23S rRNA. Forms part of two intersubunit bridges in the 70S ribosome.</text>
</comment>
<comment type="subunit">
    <text evidence="1">Part of the 50S ribosomal subunit. Forms a cluster with proteins L3 and L19. In the 70S ribosome, L14 and L19 interact and together make contacts with the 16S rRNA in bridges B5 and B8.</text>
</comment>
<comment type="similarity">
    <text evidence="1">Belongs to the universal ribosomal protein uL14 family.</text>
</comment>
<sequence length="122" mass="13412">MIQKETNLVVADNSGAKKVRCIHVFGGTGRRYAALGDQIMVSVKAAVPGGVVKKKDVCKAVVVRCVKEQKRKDGSYIRFDENAVVLLNAQGEPRGTRIFGPVARELRDKRYMKIVSLAPEVL</sequence>
<evidence type="ECO:0000255" key="1">
    <source>
        <dbReference type="HAMAP-Rule" id="MF_01367"/>
    </source>
</evidence>
<evidence type="ECO:0000305" key="2"/>
<name>RL14_CHLTE</name>
<keyword id="KW-1185">Reference proteome</keyword>
<keyword id="KW-0687">Ribonucleoprotein</keyword>
<keyword id="KW-0689">Ribosomal protein</keyword>
<keyword id="KW-0694">RNA-binding</keyword>
<keyword id="KW-0699">rRNA-binding</keyword>
<protein>
    <recommendedName>
        <fullName evidence="1">Large ribosomal subunit protein uL14</fullName>
    </recommendedName>
    <alternativeName>
        <fullName evidence="2">50S ribosomal protein L14</fullName>
    </alternativeName>
</protein>